<reference key="1">
    <citation type="journal article" date="2005" name="Proc. Natl. Acad. Sci. U.S.A.">
        <title>The complete genome sequence of Mycobacterium avium subspecies paratuberculosis.</title>
        <authorList>
            <person name="Li L."/>
            <person name="Bannantine J.P."/>
            <person name="Zhang Q."/>
            <person name="Amonsin A."/>
            <person name="May B.J."/>
            <person name="Alt D."/>
            <person name="Banerji N."/>
            <person name="Kanjilal S."/>
            <person name="Kapur V."/>
        </authorList>
    </citation>
    <scope>NUCLEOTIDE SEQUENCE [LARGE SCALE GENOMIC DNA]</scope>
    <source>
        <strain>ATCC BAA-968 / K-10</strain>
    </source>
</reference>
<gene>
    <name evidence="1" type="primary">uvrC</name>
    <name type="ordered locus">MAP_1146</name>
</gene>
<keyword id="KW-0963">Cytoplasm</keyword>
<keyword id="KW-0227">DNA damage</keyword>
<keyword id="KW-0228">DNA excision</keyword>
<keyword id="KW-0234">DNA repair</keyword>
<keyword id="KW-0267">Excision nuclease</keyword>
<keyword id="KW-1185">Reference proteome</keyword>
<keyword id="KW-0742">SOS response</keyword>
<accession>Q741E5</accession>
<comment type="function">
    <text evidence="1">The UvrABC repair system catalyzes the recognition and processing of DNA lesions. UvrC both incises the 5' and 3' sides of the lesion. The N-terminal half is responsible for the 3' incision and the C-terminal half is responsible for the 5' incision.</text>
</comment>
<comment type="subunit">
    <text evidence="1">Interacts with UvrB in an incision complex.</text>
</comment>
<comment type="subcellular location">
    <subcellularLocation>
        <location evidence="1">Cytoplasm</location>
    </subcellularLocation>
</comment>
<comment type="similarity">
    <text evidence="1">Belongs to the UvrC family.</text>
</comment>
<organism>
    <name type="scientific">Mycolicibacterium paratuberculosis (strain ATCC BAA-968 / K-10)</name>
    <name type="common">Mycobacterium paratuberculosis</name>
    <dbReference type="NCBI Taxonomy" id="262316"/>
    <lineage>
        <taxon>Bacteria</taxon>
        <taxon>Bacillati</taxon>
        <taxon>Actinomycetota</taxon>
        <taxon>Actinomycetes</taxon>
        <taxon>Mycobacteriales</taxon>
        <taxon>Mycobacteriaceae</taxon>
        <taxon>Mycobacterium</taxon>
        <taxon>Mycobacterium avium complex (MAC)</taxon>
    </lineage>
</organism>
<dbReference type="EMBL" id="AE016958">
    <property type="protein sequence ID" value="AAS03463.1"/>
    <property type="molecule type" value="Genomic_DNA"/>
</dbReference>
<dbReference type="RefSeq" id="WP_010949098.1">
    <property type="nucleotide sequence ID" value="NZ_CP106873.1"/>
</dbReference>
<dbReference type="SMR" id="Q741E5"/>
<dbReference type="STRING" id="262316.MAP_1146"/>
<dbReference type="GeneID" id="75270759"/>
<dbReference type="KEGG" id="mpa:MAP_1146"/>
<dbReference type="eggNOG" id="COG0322">
    <property type="taxonomic scope" value="Bacteria"/>
</dbReference>
<dbReference type="HOGENOM" id="CLU_014841_1_1_11"/>
<dbReference type="Proteomes" id="UP000000580">
    <property type="component" value="Chromosome"/>
</dbReference>
<dbReference type="GO" id="GO:0005737">
    <property type="term" value="C:cytoplasm"/>
    <property type="evidence" value="ECO:0007669"/>
    <property type="project" value="UniProtKB-SubCell"/>
</dbReference>
<dbReference type="GO" id="GO:0009380">
    <property type="term" value="C:excinuclease repair complex"/>
    <property type="evidence" value="ECO:0007669"/>
    <property type="project" value="InterPro"/>
</dbReference>
<dbReference type="GO" id="GO:0003677">
    <property type="term" value="F:DNA binding"/>
    <property type="evidence" value="ECO:0007669"/>
    <property type="project" value="UniProtKB-UniRule"/>
</dbReference>
<dbReference type="GO" id="GO:0009381">
    <property type="term" value="F:excinuclease ABC activity"/>
    <property type="evidence" value="ECO:0007669"/>
    <property type="project" value="UniProtKB-UniRule"/>
</dbReference>
<dbReference type="GO" id="GO:0006289">
    <property type="term" value="P:nucleotide-excision repair"/>
    <property type="evidence" value="ECO:0007669"/>
    <property type="project" value="UniProtKB-UniRule"/>
</dbReference>
<dbReference type="GO" id="GO:0009432">
    <property type="term" value="P:SOS response"/>
    <property type="evidence" value="ECO:0007669"/>
    <property type="project" value="UniProtKB-UniRule"/>
</dbReference>
<dbReference type="CDD" id="cd10434">
    <property type="entry name" value="GIY-YIG_UvrC_Cho"/>
    <property type="match status" value="1"/>
</dbReference>
<dbReference type="FunFam" id="3.30.420.340:FF:000003">
    <property type="entry name" value="UvrABC system protein C"/>
    <property type="match status" value="1"/>
</dbReference>
<dbReference type="FunFam" id="3.40.1440.10:FF:000001">
    <property type="entry name" value="UvrABC system protein C"/>
    <property type="match status" value="1"/>
</dbReference>
<dbReference type="Gene3D" id="1.10.150.20">
    <property type="entry name" value="5' to 3' exonuclease, C-terminal subdomain"/>
    <property type="match status" value="1"/>
</dbReference>
<dbReference type="Gene3D" id="3.40.1440.10">
    <property type="entry name" value="GIY-YIG endonuclease"/>
    <property type="match status" value="1"/>
</dbReference>
<dbReference type="Gene3D" id="4.10.860.10">
    <property type="entry name" value="UVR domain"/>
    <property type="match status" value="1"/>
</dbReference>
<dbReference type="Gene3D" id="3.30.420.340">
    <property type="entry name" value="UvrC, RNAse H endonuclease domain"/>
    <property type="match status" value="1"/>
</dbReference>
<dbReference type="HAMAP" id="MF_00203">
    <property type="entry name" value="UvrC"/>
    <property type="match status" value="1"/>
</dbReference>
<dbReference type="InterPro" id="IPR000305">
    <property type="entry name" value="GIY-YIG_endonuc"/>
</dbReference>
<dbReference type="InterPro" id="IPR035901">
    <property type="entry name" value="GIY-YIG_endonuc_sf"/>
</dbReference>
<dbReference type="InterPro" id="IPR047296">
    <property type="entry name" value="GIY-YIG_UvrC_Cho"/>
</dbReference>
<dbReference type="InterPro" id="IPR003583">
    <property type="entry name" value="Hlx-hairpin-Hlx_DNA-bd_motif"/>
</dbReference>
<dbReference type="InterPro" id="IPR010994">
    <property type="entry name" value="RuvA_2-like"/>
</dbReference>
<dbReference type="InterPro" id="IPR001943">
    <property type="entry name" value="UVR_dom"/>
</dbReference>
<dbReference type="InterPro" id="IPR036876">
    <property type="entry name" value="UVR_dom_sf"/>
</dbReference>
<dbReference type="InterPro" id="IPR050066">
    <property type="entry name" value="UvrABC_protein_C"/>
</dbReference>
<dbReference type="InterPro" id="IPR004791">
    <property type="entry name" value="UvrC"/>
</dbReference>
<dbReference type="InterPro" id="IPR001162">
    <property type="entry name" value="UvrC_RNase_H_dom"/>
</dbReference>
<dbReference type="InterPro" id="IPR038476">
    <property type="entry name" value="UvrC_RNase_H_dom_sf"/>
</dbReference>
<dbReference type="NCBIfam" id="NF001824">
    <property type="entry name" value="PRK00558.1-5"/>
    <property type="match status" value="1"/>
</dbReference>
<dbReference type="NCBIfam" id="TIGR00194">
    <property type="entry name" value="uvrC"/>
    <property type="match status" value="1"/>
</dbReference>
<dbReference type="PANTHER" id="PTHR30562:SF1">
    <property type="entry name" value="UVRABC SYSTEM PROTEIN C"/>
    <property type="match status" value="1"/>
</dbReference>
<dbReference type="PANTHER" id="PTHR30562">
    <property type="entry name" value="UVRC/OXIDOREDUCTASE"/>
    <property type="match status" value="1"/>
</dbReference>
<dbReference type="Pfam" id="PF01541">
    <property type="entry name" value="GIY-YIG"/>
    <property type="match status" value="1"/>
</dbReference>
<dbReference type="Pfam" id="PF14520">
    <property type="entry name" value="HHH_5"/>
    <property type="match status" value="1"/>
</dbReference>
<dbReference type="Pfam" id="PF02151">
    <property type="entry name" value="UVR"/>
    <property type="match status" value="1"/>
</dbReference>
<dbReference type="Pfam" id="PF22920">
    <property type="entry name" value="UvrC_RNaseH"/>
    <property type="match status" value="1"/>
</dbReference>
<dbReference type="Pfam" id="PF08459">
    <property type="entry name" value="UvrC_RNaseH_dom"/>
    <property type="match status" value="1"/>
</dbReference>
<dbReference type="SMART" id="SM00465">
    <property type="entry name" value="GIYc"/>
    <property type="match status" value="1"/>
</dbReference>
<dbReference type="SMART" id="SM00278">
    <property type="entry name" value="HhH1"/>
    <property type="match status" value="2"/>
</dbReference>
<dbReference type="SUPFAM" id="SSF46600">
    <property type="entry name" value="C-terminal UvrC-binding domain of UvrB"/>
    <property type="match status" value="1"/>
</dbReference>
<dbReference type="SUPFAM" id="SSF82771">
    <property type="entry name" value="GIY-YIG endonuclease"/>
    <property type="match status" value="1"/>
</dbReference>
<dbReference type="SUPFAM" id="SSF47781">
    <property type="entry name" value="RuvA domain 2-like"/>
    <property type="match status" value="1"/>
</dbReference>
<dbReference type="PROSITE" id="PS50164">
    <property type="entry name" value="GIY_YIG"/>
    <property type="match status" value="1"/>
</dbReference>
<dbReference type="PROSITE" id="PS50151">
    <property type="entry name" value="UVR"/>
    <property type="match status" value="1"/>
</dbReference>
<dbReference type="PROSITE" id="PS50165">
    <property type="entry name" value="UVRC"/>
    <property type="match status" value="1"/>
</dbReference>
<name>UVRC_MYCPA</name>
<protein>
    <recommendedName>
        <fullName evidence="1">UvrABC system protein C</fullName>
        <shortName evidence="1">Protein UvrC</shortName>
    </recommendedName>
    <alternativeName>
        <fullName evidence="1">Excinuclease ABC subunit C</fullName>
    </alternativeName>
</protein>
<sequence length="647" mass="71933">MPDPATYRPAPGSIPVEPGVYRFRDPHGRVIYVGKAKSLRSRLTSYFADVANLHPRTRQMVTTAAKVEWTVVNTEVEALQLEYNWIKEFDPRFNVRYRDDKSYPVLAVTLNEEFPRLMVYRGPRRKGVRYFGPYSHAWAIRETLDLLTRVFPARTCSAGVFKRHKQIDRPCLLGYIDKCSAPCIGRVSAEQHRQIVDDFCDFLSGKTDRFARELEQQMNAAAAELDFERAARLRDDLGALKRAMEKQAVVLGDGTDADVVAFADDELEAAVQVFHVRGGRVRGQRGWIVEKSADPGDSGEEQLVEQFLTQFYGEQAELGGAADESVNPVPREVLVPCLPSNADELTSWLSGLRGSRVALRVPRRGDKRALAETVQRNAKEALQQHKLKRAGDFNARSAALQNIQEALGLSEAPLRIECVDISHVQGTDVVGSLVVFEDGLPRKSDYRHFAIREAAGQGRSDDVASIAEVTRRRFARHLSEQNDPNMLSPEGKSRRFAYPPNLYVVDGGAPQVNAASAVLEELGITDVAVIGLAKRLEEVWVPSEPDPVIMPRNSEGLYLLQRVRDEAHRFAITYHRSKRSKRMTASVLDSVPGLGEHRRKALVSHFGSIARLKEATVDQITAVPGIGVATATAVLEALRPDESKAAP</sequence>
<evidence type="ECO:0000255" key="1">
    <source>
        <dbReference type="HAMAP-Rule" id="MF_00203"/>
    </source>
</evidence>
<feature type="chain" id="PRO_0000227446" description="UvrABC system protein C">
    <location>
        <begin position="1"/>
        <end position="647"/>
    </location>
</feature>
<feature type="domain" description="GIY-YIG" evidence="1">
    <location>
        <begin position="16"/>
        <end position="95"/>
    </location>
</feature>
<feature type="domain" description="UVR" evidence="1">
    <location>
        <begin position="208"/>
        <end position="243"/>
    </location>
</feature>
<proteinExistence type="inferred from homology"/>